<sequence length="342" mass="37378">MSGVPFPSRVIGDLDYSNLLNIGQEEAIRCVLNAYPNIGLEATNLGRARRIVQRALNDNGMDGNKVMLAYTSNLISSGLRDTFACLARENRIGAVVTTAGGVEEDVIKCLGDTLVGDFALNDHALRNNGLNRVGNLLVPNDNYRNFEDFFVPLLRRLHEQQRDSRWTTKTTPSQIIAEIGAALESVRPNDCGSSLIYWCYRNDIPVFSPAFTDGSMGDMIYFYNYSRKGLVVDPVPDVRRLRQLGCKSTNVGRITCIVLGAGLPKHHLLRNVQADAVVYVTTGSDADGCESSCNVMADRANGLLSPNCDVVRVHGDATIISPLLLLRSSDGKEKVGVREDGN</sequence>
<protein>
    <recommendedName>
        <fullName evidence="4">Deoxyhypusine synthase regulatory subunit</fullName>
    </recommendedName>
    <alternativeName>
        <fullName evidence="3">Inactive deoxyhypusine synthase</fullName>
    </alternativeName>
</protein>
<name>DHYSP_TRYB2</name>
<gene>
    <name evidence="3" type="primary">DHSp</name>
    <name evidence="5" type="ORF">TB927.1.870</name>
</gene>
<reference evidence="6" key="1">
    <citation type="journal article" date="2003" name="Nucleic Acids Res.">
        <title>The DNA sequence of chromosome I of an African trypanosome: gene content, chromosome organisation, recombination and polymorphism.</title>
        <authorList>
            <person name="Hall N."/>
            <person name="Berriman M."/>
            <person name="Lennard N.J."/>
            <person name="Harris B.R."/>
            <person name="Hertz-Fowler C."/>
            <person name="Bart-Delabesse E.N."/>
            <person name="Gerrard C.S."/>
            <person name="Atkin R.J."/>
            <person name="Barron A.J."/>
            <person name="Bowman S."/>
            <person name="Bray-Allen S.P."/>
            <person name="Bringaud F."/>
            <person name="Clark L.N."/>
            <person name="Corton C.H."/>
            <person name="Cronin A."/>
            <person name="Davies R."/>
            <person name="Doggett J."/>
            <person name="Fraser A."/>
            <person name="Grueter E."/>
            <person name="Hall S."/>
            <person name="Harper A.D."/>
            <person name="Kay M.P."/>
            <person name="Leech V."/>
            <person name="Mayes R."/>
            <person name="Price C."/>
            <person name="Quail M.A."/>
            <person name="Rabbinowitsch E."/>
            <person name="Reitter C."/>
            <person name="Rutherford K."/>
            <person name="Sasse J."/>
            <person name="Sharp S."/>
            <person name="Shownkeen R."/>
            <person name="MacLeod A."/>
            <person name="Taylor S."/>
            <person name="Tweedie A."/>
            <person name="Turner C.M."/>
            <person name="Tait A."/>
            <person name="Gull K."/>
            <person name="Barrell B."/>
            <person name="Melville S.E."/>
        </authorList>
    </citation>
    <scope>NUCLEOTIDE SEQUENCE [LARGE SCALE GENOMIC DNA]</scope>
    <source>
        <strain evidence="6">927/4 GUTat10.1</strain>
    </source>
</reference>
<reference evidence="6" key="2">
    <citation type="journal article" date="2005" name="Science">
        <title>The genome of the African trypanosome Trypanosoma brucei.</title>
        <authorList>
            <person name="Berriman M."/>
            <person name="Ghedin E."/>
            <person name="Hertz-Fowler C."/>
            <person name="Blandin G."/>
            <person name="Renauld H."/>
            <person name="Bartholomeu D.C."/>
            <person name="Lennard N.J."/>
            <person name="Caler E."/>
            <person name="Hamlin N.E."/>
            <person name="Haas B."/>
            <person name="Bohme U."/>
            <person name="Hannick L."/>
            <person name="Aslett M.A."/>
            <person name="Shallom J."/>
            <person name="Marcello L."/>
            <person name="Hou L."/>
            <person name="Wickstead B."/>
            <person name="Alsmark U.C.M."/>
            <person name="Arrowsmith C."/>
            <person name="Atkin R.J."/>
            <person name="Barron A.J."/>
            <person name="Bringaud F."/>
            <person name="Brooks K."/>
            <person name="Carrington M."/>
            <person name="Cherevach I."/>
            <person name="Chillingworth T.J."/>
            <person name="Churcher C."/>
            <person name="Clark L.N."/>
            <person name="Corton C.H."/>
            <person name="Cronin A."/>
            <person name="Davies R.M."/>
            <person name="Doggett J."/>
            <person name="Djikeng A."/>
            <person name="Feldblyum T."/>
            <person name="Field M.C."/>
            <person name="Fraser A."/>
            <person name="Goodhead I."/>
            <person name="Hance Z."/>
            <person name="Harper D."/>
            <person name="Harris B.R."/>
            <person name="Hauser H."/>
            <person name="Hostetler J."/>
            <person name="Ivens A."/>
            <person name="Jagels K."/>
            <person name="Johnson D."/>
            <person name="Johnson J."/>
            <person name="Jones K."/>
            <person name="Kerhornou A.X."/>
            <person name="Koo H."/>
            <person name="Larke N."/>
            <person name="Landfear S."/>
            <person name="Larkin C."/>
            <person name="Leech V."/>
            <person name="Line A."/>
            <person name="Lord A."/>
            <person name="Macleod A."/>
            <person name="Mooney P.J."/>
            <person name="Moule S."/>
            <person name="Martin D.M."/>
            <person name="Morgan G.W."/>
            <person name="Mungall K."/>
            <person name="Norbertczak H."/>
            <person name="Ormond D."/>
            <person name="Pai G."/>
            <person name="Peacock C.S."/>
            <person name="Peterson J."/>
            <person name="Quail M.A."/>
            <person name="Rabbinowitsch E."/>
            <person name="Rajandream M.A."/>
            <person name="Reitter C."/>
            <person name="Salzberg S.L."/>
            <person name="Sanders M."/>
            <person name="Schobel S."/>
            <person name="Sharp S."/>
            <person name="Simmonds M."/>
            <person name="Simpson A.J."/>
            <person name="Tallon L."/>
            <person name="Turner C.M."/>
            <person name="Tait A."/>
            <person name="Tivey A.R."/>
            <person name="Van Aken S."/>
            <person name="Walker D."/>
            <person name="Wanless D."/>
            <person name="Wang S."/>
            <person name="White B."/>
            <person name="White O."/>
            <person name="Whitehead S."/>
            <person name="Woodward J."/>
            <person name="Wortman J."/>
            <person name="Adams M.D."/>
            <person name="Embley T.M."/>
            <person name="Gull K."/>
            <person name="Ullu E."/>
            <person name="Barry J.D."/>
            <person name="Fairlamb A.H."/>
            <person name="Opperdoes F."/>
            <person name="Barrell B.G."/>
            <person name="Donelson J.E."/>
            <person name="Hall N."/>
            <person name="Fraser C.M."/>
            <person name="Melville S.E."/>
            <person name="El-Sayed N.M.A."/>
        </authorList>
    </citation>
    <scope>NUCLEOTIDE SEQUENCE [LARGE SCALE GENOMIC DNA]</scope>
    <source>
        <strain evidence="6">927/4 GUTat10.1</strain>
    </source>
</reference>
<reference evidence="4" key="3">
    <citation type="journal article" date="2013" name="J. Biol. Chem.">
        <title>Allosteric activation of trypanosomatid deoxyhypusine synthase by a catalytically dead paralog.</title>
        <authorList>
            <person name="Nguyen S."/>
            <person name="Jones D.C."/>
            <person name="Wyllie S."/>
            <person name="Fairlamb A.H."/>
            <person name="Phillips M.A."/>
        </authorList>
    </citation>
    <scope>FUNCTION</scope>
    <scope>SUBUNIT</scope>
    <scope>DISRUPTION PHENOTYPE</scope>
</reference>
<comment type="function">
    <text evidence="2">Required for the activation and stability of deoxyhypusine synthase DHSc. Required for cell growth and survival.</text>
</comment>
<comment type="pathway">
    <text evidence="2">Protein modification; eIF5A hypusination.</text>
</comment>
<comment type="subunit">
    <text evidence="2">Heterotetramer formed by a homodimer of the non-catalytic regulatory subunit DHSp and a homodimer of the catalytic subunit DHSc where DHSc appears to bind spermidine and DHSp appears to bind NAD(+).</text>
</comment>
<comment type="disruption phenotype">
    <text evidence="2">RNAi-mediated knockdown causes cell growth arrest followed by death, loss of DHSp expression and a failure to sustain infection in mice.</text>
</comment>
<comment type="similarity">
    <text evidence="4">Belongs to the deoxyhypusine synthase family.</text>
</comment>
<comment type="caution">
    <text evidence="2">Lacks the conserved active site Lys, and therefore lacks catalytic activity.</text>
</comment>
<keyword id="KW-0002">3D-structure</keyword>
<keyword id="KW-0386">Hypusine biosynthesis</keyword>
<keyword id="KW-0520">NAD</keyword>
<keyword id="KW-1185">Reference proteome</keyword>
<dbReference type="EMBL" id="AL929603">
    <property type="protein sequence ID" value="CAJ16007.1"/>
    <property type="molecule type" value="Genomic_DNA"/>
</dbReference>
<dbReference type="RefSeq" id="XP_001218790.1">
    <property type="nucleotide sequence ID" value="XM_001218789.1"/>
</dbReference>
<dbReference type="PDB" id="6DFT">
    <property type="method" value="X-ray"/>
    <property type="resolution" value="3.50 A"/>
    <property type="chains" value="B/D/F/H/J/L=1-342"/>
</dbReference>
<dbReference type="PDBsum" id="6DFT"/>
<dbReference type="SMR" id="Q4GZD1"/>
<dbReference type="FunCoup" id="Q4GZD1">
    <property type="interactions" value="323"/>
</dbReference>
<dbReference type="STRING" id="185431.Q4GZD1"/>
<dbReference type="PaxDb" id="5691-CAJ16007"/>
<dbReference type="GeneID" id="4357125"/>
<dbReference type="KEGG" id="tbr:TB927.1.870"/>
<dbReference type="VEuPathDB" id="TriTrypDB:Tb927.1.870"/>
<dbReference type="eggNOG" id="KOG2924">
    <property type="taxonomic scope" value="Eukaryota"/>
</dbReference>
<dbReference type="InParanoid" id="Q4GZD1"/>
<dbReference type="OMA" id="VSWGKIA"/>
<dbReference type="OrthoDB" id="294378at2759"/>
<dbReference type="BRENDA" id="2.5.1.46">
    <property type="organism ID" value="6520"/>
</dbReference>
<dbReference type="UniPathway" id="UPA00354"/>
<dbReference type="Proteomes" id="UP000008524">
    <property type="component" value="Chromosome 1"/>
</dbReference>
<dbReference type="GO" id="GO:1902494">
    <property type="term" value="C:catalytic complex"/>
    <property type="evidence" value="ECO:0000314"/>
    <property type="project" value="UniProtKB"/>
</dbReference>
<dbReference type="GO" id="GO:0005737">
    <property type="term" value="C:cytoplasm"/>
    <property type="evidence" value="ECO:0000314"/>
    <property type="project" value="GeneDB"/>
</dbReference>
<dbReference type="GO" id="GO:0034038">
    <property type="term" value="F:deoxyhypusine synthase activity"/>
    <property type="evidence" value="ECO:0000318"/>
    <property type="project" value="GO_Central"/>
</dbReference>
<dbReference type="GO" id="GO:0008047">
    <property type="term" value="F:enzyme activator activity"/>
    <property type="evidence" value="ECO:0000314"/>
    <property type="project" value="UniProtKB"/>
</dbReference>
<dbReference type="GO" id="GO:0019899">
    <property type="term" value="F:enzyme binding"/>
    <property type="evidence" value="ECO:0000353"/>
    <property type="project" value="UniProtKB"/>
</dbReference>
<dbReference type="GO" id="GO:0042803">
    <property type="term" value="F:protein homodimerization activity"/>
    <property type="evidence" value="ECO:0000314"/>
    <property type="project" value="UniProtKB"/>
</dbReference>
<dbReference type="GO" id="GO:0043085">
    <property type="term" value="P:positive regulation of catalytic activity"/>
    <property type="evidence" value="ECO:0000314"/>
    <property type="project" value="UniProtKB"/>
</dbReference>
<dbReference type="GO" id="GO:0051290">
    <property type="term" value="P:protein heterotetramerization"/>
    <property type="evidence" value="ECO:0000314"/>
    <property type="project" value="UniProtKB"/>
</dbReference>
<dbReference type="GO" id="GO:2000765">
    <property type="term" value="P:regulation of cytoplasmic translation"/>
    <property type="evidence" value="ECO:0000315"/>
    <property type="project" value="UniProtKB"/>
</dbReference>
<dbReference type="GO" id="GO:0008216">
    <property type="term" value="P:spermidine metabolic process"/>
    <property type="evidence" value="ECO:0000314"/>
    <property type="project" value="UniProtKB"/>
</dbReference>
<dbReference type="FunFam" id="3.40.910.10:FF:000011">
    <property type="entry name" value="Deoxyhypusine synthase regulatory subunit"/>
    <property type="match status" value="1"/>
</dbReference>
<dbReference type="Gene3D" id="3.40.910.10">
    <property type="entry name" value="Deoxyhypusine synthase"/>
    <property type="match status" value="1"/>
</dbReference>
<dbReference type="InterPro" id="IPR002773">
    <property type="entry name" value="Deoxyhypusine_synthase"/>
</dbReference>
<dbReference type="InterPro" id="IPR036982">
    <property type="entry name" value="Deoxyhypusine_synthase_sf"/>
</dbReference>
<dbReference type="InterPro" id="IPR029035">
    <property type="entry name" value="DHS-like_NAD/FAD-binding_dom"/>
</dbReference>
<dbReference type="PANTHER" id="PTHR11703">
    <property type="entry name" value="DEOXYHYPUSINE SYNTHASE"/>
    <property type="match status" value="1"/>
</dbReference>
<dbReference type="PANTHER" id="PTHR11703:SF0">
    <property type="entry name" value="DEOXYHYPUSINE SYNTHASE"/>
    <property type="match status" value="1"/>
</dbReference>
<dbReference type="Pfam" id="PF01916">
    <property type="entry name" value="DS"/>
    <property type="match status" value="1"/>
</dbReference>
<dbReference type="SUPFAM" id="SSF52467">
    <property type="entry name" value="DHS-like NAD/FAD-binding domain"/>
    <property type="match status" value="1"/>
</dbReference>
<evidence type="ECO:0000250" key="1">
    <source>
        <dbReference type="UniProtKB" id="P49366"/>
    </source>
</evidence>
<evidence type="ECO:0000269" key="2">
    <source>
    </source>
</evidence>
<evidence type="ECO:0000303" key="3">
    <source>
    </source>
</evidence>
<evidence type="ECO:0000305" key="4"/>
<evidence type="ECO:0000312" key="5">
    <source>
        <dbReference type="EMBL" id="CAJ16007.1"/>
    </source>
</evidence>
<evidence type="ECO:0000312" key="6">
    <source>
        <dbReference type="Proteomes" id="UP000008524"/>
    </source>
</evidence>
<evidence type="ECO:0007829" key="7">
    <source>
        <dbReference type="PDB" id="6DFT"/>
    </source>
</evidence>
<organism evidence="6">
    <name type="scientific">Trypanosoma brucei brucei (strain 927/4 GUTat10.1)</name>
    <dbReference type="NCBI Taxonomy" id="185431"/>
    <lineage>
        <taxon>Eukaryota</taxon>
        <taxon>Discoba</taxon>
        <taxon>Euglenozoa</taxon>
        <taxon>Kinetoplastea</taxon>
        <taxon>Metakinetoplastina</taxon>
        <taxon>Trypanosomatida</taxon>
        <taxon>Trypanosomatidae</taxon>
        <taxon>Trypanosoma</taxon>
    </lineage>
</organism>
<feature type="chain" id="PRO_0000438977" description="Deoxyhypusine synthase regulatory subunit">
    <location>
        <begin position="1"/>
        <end position="342"/>
    </location>
</feature>
<feature type="binding site" evidence="1">
    <location>
        <begin position="72"/>
        <end position="76"/>
    </location>
    <ligand>
        <name>NAD(+)</name>
        <dbReference type="ChEBI" id="CHEBI:57540"/>
    </ligand>
</feature>
<feature type="binding site" evidence="1">
    <location>
        <begin position="98"/>
        <end position="100"/>
    </location>
    <ligand>
        <name>NAD(+)</name>
        <dbReference type="ChEBI" id="CHEBI:57540"/>
    </ligand>
</feature>
<feature type="binding site" evidence="1">
    <location>
        <position position="104"/>
    </location>
    <ligand>
        <name>NAD(+)</name>
        <dbReference type="ChEBI" id="CHEBI:57540"/>
    </ligand>
</feature>
<feature type="binding site" evidence="1">
    <location>
        <position position="213"/>
    </location>
    <ligand>
        <name>NAD(+)</name>
        <dbReference type="ChEBI" id="CHEBI:57540"/>
    </ligand>
</feature>
<feature type="binding site" evidence="1">
    <location>
        <begin position="282"/>
        <end position="283"/>
    </location>
    <ligand>
        <name>NAD(+)</name>
        <dbReference type="ChEBI" id="CHEBI:57540"/>
    </ligand>
</feature>
<feature type="binding site" evidence="1">
    <location>
        <begin position="316"/>
        <end position="317"/>
    </location>
    <ligand>
        <name>NAD(+)</name>
        <dbReference type="ChEBI" id="CHEBI:57540"/>
    </ligand>
</feature>
<feature type="helix" evidence="7">
    <location>
        <begin position="16"/>
        <end position="20"/>
    </location>
</feature>
<feature type="helix" evidence="7">
    <location>
        <begin position="24"/>
        <end position="33"/>
    </location>
</feature>
<feature type="helix" evidence="7">
    <location>
        <begin position="35"/>
        <end position="37"/>
    </location>
</feature>
<feature type="helix" evidence="7">
    <location>
        <begin position="40"/>
        <end position="58"/>
    </location>
</feature>
<feature type="strand" evidence="7">
    <location>
        <begin position="59"/>
        <end position="63"/>
    </location>
</feature>
<feature type="strand" evidence="7">
    <location>
        <begin position="65"/>
        <end position="70"/>
    </location>
</feature>
<feature type="helix" evidence="7">
    <location>
        <begin position="72"/>
        <end position="76"/>
    </location>
</feature>
<feature type="helix" evidence="7">
    <location>
        <begin position="79"/>
        <end position="88"/>
    </location>
</feature>
<feature type="strand" evidence="7">
    <location>
        <begin position="93"/>
        <end position="96"/>
    </location>
</feature>
<feature type="helix" evidence="7">
    <location>
        <begin position="100"/>
        <end position="107"/>
    </location>
</feature>
<feature type="helix" evidence="7">
    <location>
        <begin position="122"/>
        <end position="127"/>
    </location>
</feature>
<feature type="strand" evidence="7">
    <location>
        <begin position="130"/>
        <end position="133"/>
    </location>
</feature>
<feature type="strand" evidence="7">
    <location>
        <begin position="136"/>
        <end position="139"/>
    </location>
</feature>
<feature type="helix" evidence="7">
    <location>
        <begin position="140"/>
        <end position="164"/>
    </location>
</feature>
<feature type="strand" evidence="7">
    <location>
        <begin position="166"/>
        <end position="169"/>
    </location>
</feature>
<feature type="helix" evidence="7">
    <location>
        <begin position="172"/>
        <end position="186"/>
    </location>
</feature>
<feature type="helix" evidence="7">
    <location>
        <begin position="190"/>
        <end position="193"/>
    </location>
</feature>
<feature type="helix" evidence="7">
    <location>
        <begin position="195"/>
        <end position="201"/>
    </location>
</feature>
<feature type="strand" evidence="7">
    <location>
        <begin position="212"/>
        <end position="214"/>
    </location>
</feature>
<feature type="helix" evidence="7">
    <location>
        <begin position="215"/>
        <end position="224"/>
    </location>
</feature>
<feature type="helix" evidence="7">
    <location>
        <begin position="236"/>
        <end position="245"/>
    </location>
</feature>
<feature type="strand" evidence="7">
    <location>
        <begin position="254"/>
        <end position="260"/>
    </location>
</feature>
<feature type="helix" evidence="7">
    <location>
        <begin position="263"/>
        <end position="271"/>
    </location>
</feature>
<feature type="strand" evidence="7">
    <location>
        <begin position="275"/>
        <end position="281"/>
    </location>
</feature>
<feature type="helix" evidence="7">
    <location>
        <begin position="285"/>
        <end position="287"/>
    </location>
</feature>
<feature type="strand" evidence="7">
    <location>
        <begin position="289"/>
        <end position="292"/>
    </location>
</feature>
<feature type="helix" evidence="7">
    <location>
        <begin position="295"/>
        <end position="300"/>
    </location>
</feature>
<feature type="strand" evidence="7">
    <location>
        <begin position="309"/>
        <end position="315"/>
    </location>
</feature>
<feature type="helix" evidence="7">
    <location>
        <begin position="317"/>
        <end position="325"/>
    </location>
</feature>
<proteinExistence type="evidence at protein level"/>
<accession>Q4GZD1</accession>